<feature type="chain" id="PRO_0000112725" description="Acetylornithine aminotransferase 1">
    <location>
        <begin position="1"/>
        <end position="393"/>
    </location>
</feature>
<feature type="binding site" evidence="1">
    <location>
        <position position="131"/>
    </location>
    <ligand>
        <name>N(2)-acetyl-L-ornithine</name>
        <dbReference type="ChEBI" id="CHEBI:57805"/>
    </ligand>
</feature>
<feature type="binding site" evidence="1">
    <location>
        <begin position="215"/>
        <end position="218"/>
    </location>
    <ligand>
        <name>pyridoxal 5'-phosphate</name>
        <dbReference type="ChEBI" id="CHEBI:597326"/>
    </ligand>
</feature>
<feature type="binding site" evidence="1">
    <location>
        <position position="272"/>
    </location>
    <ligand>
        <name>N(2)-acetyl-L-ornithine</name>
        <dbReference type="ChEBI" id="CHEBI:57805"/>
    </ligand>
</feature>
<feature type="binding site" evidence="1">
    <location>
        <position position="273"/>
    </location>
    <ligand>
        <name>pyridoxal 5'-phosphate</name>
        <dbReference type="ChEBI" id="CHEBI:597326"/>
    </ligand>
</feature>
<feature type="modified residue" description="N6-(pyridoxal phosphate)lysine" evidence="1">
    <location>
        <position position="244"/>
    </location>
</feature>
<reference key="1">
    <citation type="journal article" date="2003" name="Nat. Genet.">
        <title>Comparative analysis of the genome sequences of Bordetella pertussis, Bordetella parapertussis and Bordetella bronchiseptica.</title>
        <authorList>
            <person name="Parkhill J."/>
            <person name="Sebaihia M."/>
            <person name="Preston A."/>
            <person name="Murphy L.D."/>
            <person name="Thomson N.R."/>
            <person name="Harris D.E."/>
            <person name="Holden M.T.G."/>
            <person name="Churcher C.M."/>
            <person name="Bentley S.D."/>
            <person name="Mungall K.L."/>
            <person name="Cerdeno-Tarraga A.-M."/>
            <person name="Temple L."/>
            <person name="James K.D."/>
            <person name="Harris B."/>
            <person name="Quail M.A."/>
            <person name="Achtman M."/>
            <person name="Atkin R."/>
            <person name="Baker S."/>
            <person name="Basham D."/>
            <person name="Bason N."/>
            <person name="Cherevach I."/>
            <person name="Chillingworth T."/>
            <person name="Collins M."/>
            <person name="Cronin A."/>
            <person name="Davis P."/>
            <person name="Doggett J."/>
            <person name="Feltwell T."/>
            <person name="Goble A."/>
            <person name="Hamlin N."/>
            <person name="Hauser H."/>
            <person name="Holroyd S."/>
            <person name="Jagels K."/>
            <person name="Leather S."/>
            <person name="Moule S."/>
            <person name="Norberczak H."/>
            <person name="O'Neil S."/>
            <person name="Ormond D."/>
            <person name="Price C."/>
            <person name="Rabbinowitsch E."/>
            <person name="Rutter S."/>
            <person name="Sanders M."/>
            <person name="Saunders D."/>
            <person name="Seeger K."/>
            <person name="Sharp S."/>
            <person name="Simmonds M."/>
            <person name="Skelton J."/>
            <person name="Squares R."/>
            <person name="Squares S."/>
            <person name="Stevens K."/>
            <person name="Unwin L."/>
            <person name="Whitehead S."/>
            <person name="Barrell B.G."/>
            <person name="Maskell D.J."/>
        </authorList>
    </citation>
    <scope>NUCLEOTIDE SEQUENCE [LARGE SCALE GENOMIC DNA]</scope>
    <source>
        <strain>12822 / ATCC BAA-587 / NCTC 13253</strain>
    </source>
</reference>
<organism>
    <name type="scientific">Bordetella parapertussis (strain 12822 / ATCC BAA-587 / NCTC 13253)</name>
    <dbReference type="NCBI Taxonomy" id="257311"/>
    <lineage>
        <taxon>Bacteria</taxon>
        <taxon>Pseudomonadati</taxon>
        <taxon>Pseudomonadota</taxon>
        <taxon>Betaproteobacteria</taxon>
        <taxon>Burkholderiales</taxon>
        <taxon>Alcaligenaceae</taxon>
        <taxon>Bordetella</taxon>
    </lineage>
</organism>
<comment type="catalytic activity">
    <reaction evidence="1">
        <text>N(2)-acetyl-L-ornithine + 2-oxoglutarate = N-acetyl-L-glutamate 5-semialdehyde + L-glutamate</text>
        <dbReference type="Rhea" id="RHEA:18049"/>
        <dbReference type="ChEBI" id="CHEBI:16810"/>
        <dbReference type="ChEBI" id="CHEBI:29123"/>
        <dbReference type="ChEBI" id="CHEBI:29985"/>
        <dbReference type="ChEBI" id="CHEBI:57805"/>
        <dbReference type="EC" id="2.6.1.11"/>
    </reaction>
</comment>
<comment type="cofactor">
    <cofactor evidence="1">
        <name>pyridoxal 5'-phosphate</name>
        <dbReference type="ChEBI" id="CHEBI:597326"/>
    </cofactor>
    <text evidence="1">Binds 1 pyridoxal phosphate per subunit.</text>
</comment>
<comment type="pathway">
    <text evidence="1">Amino-acid biosynthesis; L-arginine biosynthesis; N(2)-acetyl-L-ornithine from L-glutamate: step 4/4.</text>
</comment>
<comment type="subunit">
    <text evidence="1">Homodimer.</text>
</comment>
<comment type="subcellular location">
    <subcellularLocation>
        <location evidence="1">Cytoplasm</location>
    </subcellularLocation>
</comment>
<comment type="miscellaneous">
    <text evidence="1">May also have succinyldiaminopimelate aminotransferase activity, thus carrying out the corresponding step in lysine biosynthesis.</text>
</comment>
<comment type="similarity">
    <text evidence="1">Belongs to the class-III pyridoxal-phosphate-dependent aminotransferase family. ArgD subfamily.</text>
</comment>
<comment type="sequence caution" evidence="2">
    <conflict type="erroneous initiation">
        <sequence resource="EMBL-CDS" id="CAE37837"/>
    </conflict>
</comment>
<sequence>MSSALANIYARLPVSFTHGRGVWLWDTGERRYLDALAGIGVSCLGHGHPGLVAAISEQAARLIHTSNIYEVPQQAALARRLAELSGMSEVLFSNSGSEANEAAIKLARYYGYKQGNTHAHIITMDSSWHGRTLATLAATGSDKARQGFGPMPSGFIQVPYNDLPAIRAAGEAEPRVTAVLLEVLQGEGGIRPSDMAFLRGVRQLCTERGWLLMIDEVQSGIGRTGKWFAHQWADIRPDVMTLAKGLAGGVPIGAMLAAGPAAGVFAPGSHGTTFGGGPLACAAGLAVIDAIEQEGLLANAHEVGAHLHAALASELAGVPGIIEVRGHGLMLGIELDRPCGILATRAMEAGLLINVTRERVVRLLPPLILSGEEADQIVRILVPLIKQFLAQQQ</sequence>
<protein>
    <recommendedName>
        <fullName evidence="1">Acetylornithine aminotransferase 1</fullName>
        <shortName evidence="1">ACOAT 1</shortName>
        <ecNumber evidence="1">2.6.1.11</ecNumber>
    </recommendedName>
</protein>
<proteinExistence type="inferred from homology"/>
<keyword id="KW-0028">Amino-acid biosynthesis</keyword>
<keyword id="KW-0032">Aminotransferase</keyword>
<keyword id="KW-0055">Arginine biosynthesis</keyword>
<keyword id="KW-0963">Cytoplasm</keyword>
<keyword id="KW-0663">Pyridoxal phosphate</keyword>
<keyword id="KW-0808">Transferase</keyword>
<evidence type="ECO:0000255" key="1">
    <source>
        <dbReference type="HAMAP-Rule" id="MF_01107"/>
    </source>
</evidence>
<evidence type="ECO:0000305" key="2"/>
<gene>
    <name evidence="1" type="primary">argD1</name>
    <name type="ordered locus">BPP2543</name>
</gene>
<dbReference type="EC" id="2.6.1.11" evidence="1"/>
<dbReference type="EMBL" id="BX640430">
    <property type="protein sequence ID" value="CAE37837.1"/>
    <property type="status" value="ALT_INIT"/>
    <property type="molecule type" value="Genomic_DNA"/>
</dbReference>
<dbReference type="RefSeq" id="WP_010928596.1">
    <property type="nucleotide sequence ID" value="NC_002928.3"/>
</dbReference>
<dbReference type="SMR" id="Q7W7H6"/>
<dbReference type="GeneID" id="93204330"/>
<dbReference type="KEGG" id="bpa:BPP2543"/>
<dbReference type="HOGENOM" id="CLU_016922_10_1_4"/>
<dbReference type="UniPathway" id="UPA00068">
    <property type="reaction ID" value="UER00109"/>
</dbReference>
<dbReference type="Proteomes" id="UP000001421">
    <property type="component" value="Chromosome"/>
</dbReference>
<dbReference type="GO" id="GO:0005737">
    <property type="term" value="C:cytoplasm"/>
    <property type="evidence" value="ECO:0007669"/>
    <property type="project" value="UniProtKB-SubCell"/>
</dbReference>
<dbReference type="GO" id="GO:0042802">
    <property type="term" value="F:identical protein binding"/>
    <property type="evidence" value="ECO:0007669"/>
    <property type="project" value="TreeGrafter"/>
</dbReference>
<dbReference type="GO" id="GO:0003992">
    <property type="term" value="F:N2-acetyl-L-ornithine:2-oxoglutarate 5-aminotransferase activity"/>
    <property type="evidence" value="ECO:0007669"/>
    <property type="project" value="UniProtKB-UniRule"/>
</dbReference>
<dbReference type="GO" id="GO:0030170">
    <property type="term" value="F:pyridoxal phosphate binding"/>
    <property type="evidence" value="ECO:0007669"/>
    <property type="project" value="InterPro"/>
</dbReference>
<dbReference type="GO" id="GO:0006526">
    <property type="term" value="P:L-arginine biosynthetic process"/>
    <property type="evidence" value="ECO:0007669"/>
    <property type="project" value="UniProtKB-UniRule"/>
</dbReference>
<dbReference type="CDD" id="cd00610">
    <property type="entry name" value="OAT_like"/>
    <property type="match status" value="1"/>
</dbReference>
<dbReference type="FunFam" id="3.40.640.10:FF:000004">
    <property type="entry name" value="Acetylornithine aminotransferase"/>
    <property type="match status" value="1"/>
</dbReference>
<dbReference type="Gene3D" id="3.90.1150.10">
    <property type="entry name" value="Aspartate Aminotransferase, domain 1"/>
    <property type="match status" value="1"/>
</dbReference>
<dbReference type="Gene3D" id="3.40.640.10">
    <property type="entry name" value="Type I PLP-dependent aspartate aminotransferase-like (Major domain)"/>
    <property type="match status" value="1"/>
</dbReference>
<dbReference type="HAMAP" id="MF_01107">
    <property type="entry name" value="ArgD_aminotrans_3"/>
    <property type="match status" value="1"/>
</dbReference>
<dbReference type="InterPro" id="IPR004636">
    <property type="entry name" value="AcOrn/SuccOrn_fam"/>
</dbReference>
<dbReference type="InterPro" id="IPR005814">
    <property type="entry name" value="Aminotrans_3"/>
</dbReference>
<dbReference type="InterPro" id="IPR049704">
    <property type="entry name" value="Aminotrans_3_PPA_site"/>
</dbReference>
<dbReference type="InterPro" id="IPR050103">
    <property type="entry name" value="Class-III_PLP-dep_AT"/>
</dbReference>
<dbReference type="InterPro" id="IPR015424">
    <property type="entry name" value="PyrdxlP-dep_Trfase"/>
</dbReference>
<dbReference type="InterPro" id="IPR015421">
    <property type="entry name" value="PyrdxlP-dep_Trfase_major"/>
</dbReference>
<dbReference type="InterPro" id="IPR015422">
    <property type="entry name" value="PyrdxlP-dep_Trfase_small"/>
</dbReference>
<dbReference type="NCBIfam" id="TIGR00707">
    <property type="entry name" value="argD"/>
    <property type="match status" value="1"/>
</dbReference>
<dbReference type="NCBIfam" id="NF002325">
    <property type="entry name" value="PRK01278.1"/>
    <property type="match status" value="1"/>
</dbReference>
<dbReference type="PANTHER" id="PTHR11986:SF79">
    <property type="entry name" value="ACETYLORNITHINE AMINOTRANSFERASE, MITOCHONDRIAL"/>
    <property type="match status" value="1"/>
</dbReference>
<dbReference type="PANTHER" id="PTHR11986">
    <property type="entry name" value="AMINOTRANSFERASE CLASS III"/>
    <property type="match status" value="1"/>
</dbReference>
<dbReference type="Pfam" id="PF00202">
    <property type="entry name" value="Aminotran_3"/>
    <property type="match status" value="1"/>
</dbReference>
<dbReference type="PIRSF" id="PIRSF000521">
    <property type="entry name" value="Transaminase_4ab_Lys_Orn"/>
    <property type="match status" value="1"/>
</dbReference>
<dbReference type="SUPFAM" id="SSF53383">
    <property type="entry name" value="PLP-dependent transferases"/>
    <property type="match status" value="1"/>
</dbReference>
<dbReference type="PROSITE" id="PS00600">
    <property type="entry name" value="AA_TRANSFER_CLASS_3"/>
    <property type="match status" value="1"/>
</dbReference>
<name>ARGD1_BORPA</name>
<accession>Q7W7H6</accession>